<reference key="1">
    <citation type="journal article" date="2010" name="Appl. Environ. Microbiol.">
        <title>Conserved symbiotic plasmid DNA sequences in the multireplicon pangenomic structure of Rhizobium etli.</title>
        <authorList>
            <person name="Gonzalez V."/>
            <person name="Acosta J.L."/>
            <person name="Santamaria R.I."/>
            <person name="Bustos P."/>
            <person name="Fernandez J.L."/>
            <person name="Hernandez Gonzalez I.L."/>
            <person name="Diaz R."/>
            <person name="Flores M."/>
            <person name="Palacios R."/>
            <person name="Mora J."/>
            <person name="Davila G."/>
        </authorList>
    </citation>
    <scope>NUCLEOTIDE SEQUENCE [LARGE SCALE GENOMIC DNA]</scope>
    <source>
        <strain>CIAT 652</strain>
    </source>
</reference>
<dbReference type="EC" id="2.3.1.275" evidence="1"/>
<dbReference type="EMBL" id="CP001074">
    <property type="protein sequence ID" value="ACE90687.1"/>
    <property type="molecule type" value="Genomic_DNA"/>
</dbReference>
<dbReference type="SMR" id="B3PW35"/>
<dbReference type="KEGG" id="rec:RHECIAT_CH0001713"/>
<dbReference type="eggNOG" id="COG0344">
    <property type="taxonomic scope" value="Bacteria"/>
</dbReference>
<dbReference type="HOGENOM" id="CLU_081254_1_0_5"/>
<dbReference type="UniPathway" id="UPA00085"/>
<dbReference type="Proteomes" id="UP000008817">
    <property type="component" value="Chromosome"/>
</dbReference>
<dbReference type="GO" id="GO:0005886">
    <property type="term" value="C:plasma membrane"/>
    <property type="evidence" value="ECO:0007669"/>
    <property type="project" value="UniProtKB-SubCell"/>
</dbReference>
<dbReference type="GO" id="GO:0043772">
    <property type="term" value="F:acyl-phosphate glycerol-3-phosphate acyltransferase activity"/>
    <property type="evidence" value="ECO:0007669"/>
    <property type="project" value="UniProtKB-UniRule"/>
</dbReference>
<dbReference type="GO" id="GO:0008654">
    <property type="term" value="P:phospholipid biosynthetic process"/>
    <property type="evidence" value="ECO:0007669"/>
    <property type="project" value="UniProtKB-UniRule"/>
</dbReference>
<dbReference type="HAMAP" id="MF_01043">
    <property type="entry name" value="PlsY"/>
    <property type="match status" value="1"/>
</dbReference>
<dbReference type="InterPro" id="IPR003811">
    <property type="entry name" value="G3P_acylTferase_PlsY"/>
</dbReference>
<dbReference type="NCBIfam" id="TIGR00023">
    <property type="entry name" value="glycerol-3-phosphate 1-O-acyltransferase PlsY"/>
    <property type="match status" value="1"/>
</dbReference>
<dbReference type="PANTHER" id="PTHR30309:SF0">
    <property type="entry name" value="GLYCEROL-3-PHOSPHATE ACYLTRANSFERASE-RELATED"/>
    <property type="match status" value="1"/>
</dbReference>
<dbReference type="PANTHER" id="PTHR30309">
    <property type="entry name" value="INNER MEMBRANE PROTEIN YGIH"/>
    <property type="match status" value="1"/>
</dbReference>
<dbReference type="Pfam" id="PF02660">
    <property type="entry name" value="G3P_acyltransf"/>
    <property type="match status" value="1"/>
</dbReference>
<dbReference type="SMART" id="SM01207">
    <property type="entry name" value="G3P_acyltransf"/>
    <property type="match status" value="1"/>
</dbReference>
<sequence length="206" mass="21464">MLSNLMSWHITLPIALAAAVIGYLFGSIPFGLILTRAAGLGDVRSIGSGNIGATNVLRTGNRKLAAATLLLDALKASAAAWIVGYFLGEEAAIIAGFFAFIGHLFPVWIGFKGGKGVATYIGTLLGVAPIMVVLFAAVWLAVAFTTRYSSLSALVAMLVIPVALLILGNEKVAAVMAIMTVISYWKHKANISRLMGGTETKIGAKG</sequence>
<proteinExistence type="inferred from homology"/>
<protein>
    <recommendedName>
        <fullName evidence="1">Glycerol-3-phosphate acyltransferase</fullName>
    </recommendedName>
    <alternativeName>
        <fullName evidence="1">Acyl-PO4 G3P acyltransferase</fullName>
    </alternativeName>
    <alternativeName>
        <fullName evidence="1">Acyl-phosphate--glycerol-3-phosphate acyltransferase</fullName>
    </alternativeName>
    <alternativeName>
        <fullName evidence="1">G3P acyltransferase</fullName>
        <shortName evidence="1">GPAT</shortName>
        <ecNumber evidence="1">2.3.1.275</ecNumber>
    </alternativeName>
    <alternativeName>
        <fullName evidence="1">Lysophosphatidic acid synthase</fullName>
        <shortName evidence="1">LPA synthase</shortName>
    </alternativeName>
</protein>
<gene>
    <name evidence="1" type="primary">plsY</name>
    <name type="ordered locus">RHECIAT_CH0001713</name>
</gene>
<feature type="chain" id="PRO_1000136112" description="Glycerol-3-phosphate acyltransferase">
    <location>
        <begin position="1"/>
        <end position="206"/>
    </location>
</feature>
<feature type="transmembrane region" description="Helical" evidence="1">
    <location>
        <begin position="14"/>
        <end position="34"/>
    </location>
</feature>
<feature type="transmembrane region" description="Helical" evidence="1">
    <location>
        <begin position="67"/>
        <end position="87"/>
    </location>
</feature>
<feature type="transmembrane region" description="Helical" evidence="1">
    <location>
        <begin position="91"/>
        <end position="111"/>
    </location>
</feature>
<feature type="transmembrane region" description="Helical" evidence="1">
    <location>
        <begin position="124"/>
        <end position="144"/>
    </location>
</feature>
<feature type="transmembrane region" description="Helical" evidence="1">
    <location>
        <begin position="148"/>
        <end position="168"/>
    </location>
</feature>
<name>PLSY_RHIE6</name>
<comment type="function">
    <text evidence="1">Catalyzes the transfer of an acyl group from acyl-phosphate (acyl-PO(4)) to glycerol-3-phosphate (G3P) to form lysophosphatidic acid (LPA). This enzyme utilizes acyl-phosphate as fatty acyl donor, but not acyl-CoA or acyl-ACP.</text>
</comment>
<comment type="catalytic activity">
    <reaction evidence="1">
        <text>an acyl phosphate + sn-glycerol 3-phosphate = a 1-acyl-sn-glycero-3-phosphate + phosphate</text>
        <dbReference type="Rhea" id="RHEA:34075"/>
        <dbReference type="ChEBI" id="CHEBI:43474"/>
        <dbReference type="ChEBI" id="CHEBI:57597"/>
        <dbReference type="ChEBI" id="CHEBI:57970"/>
        <dbReference type="ChEBI" id="CHEBI:59918"/>
        <dbReference type="EC" id="2.3.1.275"/>
    </reaction>
</comment>
<comment type="pathway">
    <text evidence="1">Lipid metabolism; phospholipid metabolism.</text>
</comment>
<comment type="subunit">
    <text evidence="1">Probably interacts with PlsX.</text>
</comment>
<comment type="subcellular location">
    <subcellularLocation>
        <location evidence="1">Cell inner membrane</location>
        <topology evidence="1">Multi-pass membrane protein</topology>
    </subcellularLocation>
</comment>
<comment type="similarity">
    <text evidence="1">Belongs to the PlsY family.</text>
</comment>
<organism>
    <name type="scientific">Rhizobium etli (strain CIAT 652)</name>
    <dbReference type="NCBI Taxonomy" id="491916"/>
    <lineage>
        <taxon>Bacteria</taxon>
        <taxon>Pseudomonadati</taxon>
        <taxon>Pseudomonadota</taxon>
        <taxon>Alphaproteobacteria</taxon>
        <taxon>Hyphomicrobiales</taxon>
        <taxon>Rhizobiaceae</taxon>
        <taxon>Rhizobium/Agrobacterium group</taxon>
        <taxon>Rhizobium</taxon>
    </lineage>
</organism>
<keyword id="KW-0997">Cell inner membrane</keyword>
<keyword id="KW-1003">Cell membrane</keyword>
<keyword id="KW-0444">Lipid biosynthesis</keyword>
<keyword id="KW-0443">Lipid metabolism</keyword>
<keyword id="KW-0472">Membrane</keyword>
<keyword id="KW-0594">Phospholipid biosynthesis</keyword>
<keyword id="KW-1208">Phospholipid metabolism</keyword>
<keyword id="KW-0808">Transferase</keyword>
<keyword id="KW-0812">Transmembrane</keyword>
<keyword id="KW-1133">Transmembrane helix</keyword>
<evidence type="ECO:0000255" key="1">
    <source>
        <dbReference type="HAMAP-Rule" id="MF_01043"/>
    </source>
</evidence>
<accession>B3PW35</accession>